<proteinExistence type="inferred from homology"/>
<name>RS3_ANADF</name>
<feature type="chain" id="PRO_1000086086" description="Small ribosomal subunit protein uS3">
    <location>
        <begin position="1"/>
        <end position="224"/>
    </location>
</feature>
<feature type="domain" description="KH type-2" evidence="1">
    <location>
        <begin position="38"/>
        <end position="106"/>
    </location>
</feature>
<organism>
    <name type="scientific">Anaeromyxobacter sp. (strain Fw109-5)</name>
    <dbReference type="NCBI Taxonomy" id="404589"/>
    <lineage>
        <taxon>Bacteria</taxon>
        <taxon>Pseudomonadati</taxon>
        <taxon>Myxococcota</taxon>
        <taxon>Myxococcia</taxon>
        <taxon>Myxococcales</taxon>
        <taxon>Cystobacterineae</taxon>
        <taxon>Anaeromyxobacteraceae</taxon>
        <taxon>Anaeromyxobacter</taxon>
    </lineage>
</organism>
<sequence>MGQKVHPIGFRLGVIRSWDSKWYEEKNYAKWLHEDIHLREYVKEKLGQAGISRIEIERAANKVKINVHTARPGIVIGKRGAGIETIKKELQGKTDNEVYLNVVEVRKAETDAQLVAENIATQLERRIAFRRAMKKSVQTALKFGAKGIRVACSGRLGGSEMARYEWYREGRVPLHTLRADIDYGFAEAKTTYGKIGCKVWIMRGEVLPQSASARPPRSAGGARP</sequence>
<protein>
    <recommendedName>
        <fullName evidence="1">Small ribosomal subunit protein uS3</fullName>
    </recommendedName>
    <alternativeName>
        <fullName evidence="2">30S ribosomal protein S3</fullName>
    </alternativeName>
</protein>
<reference key="1">
    <citation type="journal article" date="2015" name="Genome Announc.">
        <title>Complete genome sequence of Anaeromyxobacter sp. Fw109-5, an anaerobic, metal-reducing bacterium isolated from a contaminated subsurface environment.</title>
        <authorList>
            <person name="Hwang C."/>
            <person name="Copeland A."/>
            <person name="Lucas S."/>
            <person name="Lapidus A."/>
            <person name="Barry K."/>
            <person name="Glavina Del Rio T."/>
            <person name="Dalin E."/>
            <person name="Tice H."/>
            <person name="Pitluck S."/>
            <person name="Sims D."/>
            <person name="Brettin T."/>
            <person name="Bruce D.C."/>
            <person name="Detter J.C."/>
            <person name="Han C.S."/>
            <person name="Schmutz J."/>
            <person name="Larimer F.W."/>
            <person name="Land M.L."/>
            <person name="Hauser L.J."/>
            <person name="Kyrpides N."/>
            <person name="Lykidis A."/>
            <person name="Richardson P."/>
            <person name="Belieav A."/>
            <person name="Sanford R.A."/>
            <person name="Loeffler F.E."/>
            <person name="Fields M.W."/>
        </authorList>
    </citation>
    <scope>NUCLEOTIDE SEQUENCE [LARGE SCALE GENOMIC DNA]</scope>
    <source>
        <strain>Fw109-5</strain>
    </source>
</reference>
<gene>
    <name evidence="1" type="primary">rpsC</name>
    <name type="ordered locus">Anae109_1917</name>
</gene>
<dbReference type="EMBL" id="CP000769">
    <property type="protein sequence ID" value="ABS26120.1"/>
    <property type="molecule type" value="Genomic_DNA"/>
</dbReference>
<dbReference type="RefSeq" id="WP_012096699.1">
    <property type="nucleotide sequence ID" value="NC_009675.1"/>
</dbReference>
<dbReference type="SMR" id="A7HBM4"/>
<dbReference type="STRING" id="404589.Anae109_1917"/>
<dbReference type="KEGG" id="afw:Anae109_1917"/>
<dbReference type="eggNOG" id="COG0092">
    <property type="taxonomic scope" value="Bacteria"/>
</dbReference>
<dbReference type="HOGENOM" id="CLU_058591_0_2_7"/>
<dbReference type="OrthoDB" id="9806396at2"/>
<dbReference type="Proteomes" id="UP000006382">
    <property type="component" value="Chromosome"/>
</dbReference>
<dbReference type="GO" id="GO:0022627">
    <property type="term" value="C:cytosolic small ribosomal subunit"/>
    <property type="evidence" value="ECO:0007669"/>
    <property type="project" value="TreeGrafter"/>
</dbReference>
<dbReference type="GO" id="GO:0003729">
    <property type="term" value="F:mRNA binding"/>
    <property type="evidence" value="ECO:0007669"/>
    <property type="project" value="UniProtKB-UniRule"/>
</dbReference>
<dbReference type="GO" id="GO:0019843">
    <property type="term" value="F:rRNA binding"/>
    <property type="evidence" value="ECO:0007669"/>
    <property type="project" value="UniProtKB-UniRule"/>
</dbReference>
<dbReference type="GO" id="GO:0003735">
    <property type="term" value="F:structural constituent of ribosome"/>
    <property type="evidence" value="ECO:0007669"/>
    <property type="project" value="InterPro"/>
</dbReference>
<dbReference type="GO" id="GO:0006412">
    <property type="term" value="P:translation"/>
    <property type="evidence" value="ECO:0007669"/>
    <property type="project" value="UniProtKB-UniRule"/>
</dbReference>
<dbReference type="CDD" id="cd02412">
    <property type="entry name" value="KH-II_30S_S3"/>
    <property type="match status" value="1"/>
</dbReference>
<dbReference type="FunFam" id="3.30.1140.32:FF:000002">
    <property type="entry name" value="30S ribosomal protein S3"/>
    <property type="match status" value="1"/>
</dbReference>
<dbReference type="FunFam" id="3.30.300.20:FF:000001">
    <property type="entry name" value="30S ribosomal protein S3"/>
    <property type="match status" value="1"/>
</dbReference>
<dbReference type="Gene3D" id="3.30.300.20">
    <property type="match status" value="1"/>
</dbReference>
<dbReference type="Gene3D" id="3.30.1140.32">
    <property type="entry name" value="Ribosomal protein S3, C-terminal domain"/>
    <property type="match status" value="1"/>
</dbReference>
<dbReference type="HAMAP" id="MF_01309_B">
    <property type="entry name" value="Ribosomal_uS3_B"/>
    <property type="match status" value="1"/>
</dbReference>
<dbReference type="InterPro" id="IPR004087">
    <property type="entry name" value="KH_dom"/>
</dbReference>
<dbReference type="InterPro" id="IPR015946">
    <property type="entry name" value="KH_dom-like_a/b"/>
</dbReference>
<dbReference type="InterPro" id="IPR004044">
    <property type="entry name" value="KH_dom_type_2"/>
</dbReference>
<dbReference type="InterPro" id="IPR009019">
    <property type="entry name" value="KH_sf_prok-type"/>
</dbReference>
<dbReference type="InterPro" id="IPR036419">
    <property type="entry name" value="Ribosomal_S3_C_sf"/>
</dbReference>
<dbReference type="InterPro" id="IPR005704">
    <property type="entry name" value="Ribosomal_uS3_bac-typ"/>
</dbReference>
<dbReference type="InterPro" id="IPR001351">
    <property type="entry name" value="Ribosomal_uS3_C"/>
</dbReference>
<dbReference type="InterPro" id="IPR018280">
    <property type="entry name" value="Ribosomal_uS3_CS"/>
</dbReference>
<dbReference type="NCBIfam" id="TIGR01009">
    <property type="entry name" value="rpsC_bact"/>
    <property type="match status" value="1"/>
</dbReference>
<dbReference type="PANTHER" id="PTHR11760">
    <property type="entry name" value="30S/40S RIBOSOMAL PROTEIN S3"/>
    <property type="match status" value="1"/>
</dbReference>
<dbReference type="PANTHER" id="PTHR11760:SF19">
    <property type="entry name" value="SMALL RIBOSOMAL SUBUNIT PROTEIN US3C"/>
    <property type="match status" value="1"/>
</dbReference>
<dbReference type="Pfam" id="PF07650">
    <property type="entry name" value="KH_2"/>
    <property type="match status" value="1"/>
</dbReference>
<dbReference type="Pfam" id="PF00189">
    <property type="entry name" value="Ribosomal_S3_C"/>
    <property type="match status" value="1"/>
</dbReference>
<dbReference type="SMART" id="SM00322">
    <property type="entry name" value="KH"/>
    <property type="match status" value="1"/>
</dbReference>
<dbReference type="SUPFAM" id="SSF54814">
    <property type="entry name" value="Prokaryotic type KH domain (KH-domain type II)"/>
    <property type="match status" value="1"/>
</dbReference>
<dbReference type="SUPFAM" id="SSF54821">
    <property type="entry name" value="Ribosomal protein S3 C-terminal domain"/>
    <property type="match status" value="1"/>
</dbReference>
<dbReference type="PROSITE" id="PS50823">
    <property type="entry name" value="KH_TYPE_2"/>
    <property type="match status" value="1"/>
</dbReference>
<dbReference type="PROSITE" id="PS00548">
    <property type="entry name" value="RIBOSOMAL_S3"/>
    <property type="match status" value="1"/>
</dbReference>
<evidence type="ECO:0000255" key="1">
    <source>
        <dbReference type="HAMAP-Rule" id="MF_01309"/>
    </source>
</evidence>
<evidence type="ECO:0000305" key="2"/>
<accession>A7HBM4</accession>
<keyword id="KW-1185">Reference proteome</keyword>
<keyword id="KW-0687">Ribonucleoprotein</keyword>
<keyword id="KW-0689">Ribosomal protein</keyword>
<keyword id="KW-0694">RNA-binding</keyword>
<keyword id="KW-0699">rRNA-binding</keyword>
<comment type="function">
    <text evidence="1">Binds the lower part of the 30S subunit head. Binds mRNA in the 70S ribosome, positioning it for translation.</text>
</comment>
<comment type="subunit">
    <text evidence="1">Part of the 30S ribosomal subunit. Forms a tight complex with proteins S10 and S14.</text>
</comment>
<comment type="similarity">
    <text evidence="1">Belongs to the universal ribosomal protein uS3 family.</text>
</comment>